<gene>
    <name evidence="1" type="primary">dnaK</name>
    <name type="ordered locus">BPP3485</name>
</gene>
<proteinExistence type="inferred from homology"/>
<comment type="function">
    <text evidence="1">Acts as a chaperone.</text>
</comment>
<comment type="induction">
    <text evidence="1">By stress conditions e.g. heat shock.</text>
</comment>
<comment type="similarity">
    <text evidence="1">Belongs to the heat shock protein 70 family.</text>
</comment>
<accession>Q7W519</accession>
<sequence>MSKIIGIDLGTTNSCVAVLDGGQVKIIENAEGARTTPSIVAYMDDGETLVGAPAKRQAVTNPKNTLYAVKRLIGRKFDEKAVQKDIDLMPYSIVKADNGDAWVEVHGKKLAPPQVSAEVLRKMKKTAEDYLGEEVTEAVITVPAYFNDSQRQATKDAGRIAGLEVKRIINEPTAAALAFGLDKTEKGDRKIVVYDLGGGTFDVSIIEIADVDGEMQFEVLSTNGDTFLGGEDFDQRIIDYIISEFKKEQGVDLSKDVLALQRLKEAAEKAKIELSSSQQTEINLPYITADASGPKHLNLKITRAKLEALVEELIERTIEPCRVAIKDAGVKVSDIDDVILVGGMTRMPKVQDKVKEFFGREPRKDVNPDEAVAAGAAIQGSVLSGERKDVLLLDVTPLSLGIETLGGVMTKMIQKNTTIPTRYSQTFSTADDNQPAVTIKVFQGEREIAAGNKGLGEFNLEGIPPAPRGLPQIEVTFDIDANGILHVSAKDKGTGKENKITIKANSGLSEDEIQRMVKDAEANAEEDHRLAELAQARNQADALVHATRKSLTEYGEKLEAAEKESIEAAIKDLEDILKTGDKAEIDAKVEALSTASQKLGEKMYADMQAQQQAQQQQAADNAKPVDDNVVDADFKEVKRDQ</sequence>
<evidence type="ECO:0000255" key="1">
    <source>
        <dbReference type="HAMAP-Rule" id="MF_00332"/>
    </source>
</evidence>
<evidence type="ECO:0000256" key="2">
    <source>
        <dbReference type="SAM" id="MobiDB-lite"/>
    </source>
</evidence>
<organism>
    <name type="scientific">Bordetella parapertussis (strain 12822 / ATCC BAA-587 / NCTC 13253)</name>
    <dbReference type="NCBI Taxonomy" id="257311"/>
    <lineage>
        <taxon>Bacteria</taxon>
        <taxon>Pseudomonadati</taxon>
        <taxon>Pseudomonadota</taxon>
        <taxon>Betaproteobacteria</taxon>
        <taxon>Burkholderiales</taxon>
        <taxon>Alcaligenaceae</taxon>
        <taxon>Bordetella</taxon>
    </lineage>
</organism>
<reference key="1">
    <citation type="journal article" date="2003" name="Nat. Genet.">
        <title>Comparative analysis of the genome sequences of Bordetella pertussis, Bordetella parapertussis and Bordetella bronchiseptica.</title>
        <authorList>
            <person name="Parkhill J."/>
            <person name="Sebaihia M."/>
            <person name="Preston A."/>
            <person name="Murphy L.D."/>
            <person name="Thomson N.R."/>
            <person name="Harris D.E."/>
            <person name="Holden M.T.G."/>
            <person name="Churcher C.M."/>
            <person name="Bentley S.D."/>
            <person name="Mungall K.L."/>
            <person name="Cerdeno-Tarraga A.-M."/>
            <person name="Temple L."/>
            <person name="James K.D."/>
            <person name="Harris B."/>
            <person name="Quail M.A."/>
            <person name="Achtman M."/>
            <person name="Atkin R."/>
            <person name="Baker S."/>
            <person name="Basham D."/>
            <person name="Bason N."/>
            <person name="Cherevach I."/>
            <person name="Chillingworth T."/>
            <person name="Collins M."/>
            <person name="Cronin A."/>
            <person name="Davis P."/>
            <person name="Doggett J."/>
            <person name="Feltwell T."/>
            <person name="Goble A."/>
            <person name="Hamlin N."/>
            <person name="Hauser H."/>
            <person name="Holroyd S."/>
            <person name="Jagels K."/>
            <person name="Leather S."/>
            <person name="Moule S."/>
            <person name="Norberczak H."/>
            <person name="O'Neil S."/>
            <person name="Ormond D."/>
            <person name="Price C."/>
            <person name="Rabbinowitsch E."/>
            <person name="Rutter S."/>
            <person name="Sanders M."/>
            <person name="Saunders D."/>
            <person name="Seeger K."/>
            <person name="Sharp S."/>
            <person name="Simmonds M."/>
            <person name="Skelton J."/>
            <person name="Squares R."/>
            <person name="Squares S."/>
            <person name="Stevens K."/>
            <person name="Unwin L."/>
            <person name="Whitehead S."/>
            <person name="Barrell B.G."/>
            <person name="Maskell D.J."/>
        </authorList>
    </citation>
    <scope>NUCLEOTIDE SEQUENCE [LARGE SCALE GENOMIC DNA]</scope>
    <source>
        <strain>12822 / ATCC BAA-587 / NCTC 13253</strain>
    </source>
</reference>
<dbReference type="EMBL" id="BX640433">
    <property type="protein sequence ID" value="CAE38769.1"/>
    <property type="molecule type" value="Genomic_DNA"/>
</dbReference>
<dbReference type="RefSeq" id="WP_010929085.1">
    <property type="nucleotide sequence ID" value="NC_002928.3"/>
</dbReference>
<dbReference type="SMR" id="Q7W519"/>
<dbReference type="GeneID" id="93205271"/>
<dbReference type="KEGG" id="bpa:BPP3485"/>
<dbReference type="HOGENOM" id="CLU_005965_2_1_4"/>
<dbReference type="Proteomes" id="UP000001421">
    <property type="component" value="Chromosome"/>
</dbReference>
<dbReference type="GO" id="GO:0005524">
    <property type="term" value="F:ATP binding"/>
    <property type="evidence" value="ECO:0007669"/>
    <property type="project" value="UniProtKB-UniRule"/>
</dbReference>
<dbReference type="GO" id="GO:0140662">
    <property type="term" value="F:ATP-dependent protein folding chaperone"/>
    <property type="evidence" value="ECO:0007669"/>
    <property type="project" value="InterPro"/>
</dbReference>
<dbReference type="GO" id="GO:0051082">
    <property type="term" value="F:unfolded protein binding"/>
    <property type="evidence" value="ECO:0007669"/>
    <property type="project" value="InterPro"/>
</dbReference>
<dbReference type="CDD" id="cd10234">
    <property type="entry name" value="ASKHA_NBD_HSP70_DnaK-like"/>
    <property type="match status" value="1"/>
</dbReference>
<dbReference type="FunFam" id="2.60.34.10:FF:000014">
    <property type="entry name" value="Chaperone protein DnaK HSP70"/>
    <property type="match status" value="1"/>
</dbReference>
<dbReference type="FunFam" id="3.30.30.30:FF:000003">
    <property type="entry name" value="Heat shock protein 9"/>
    <property type="match status" value="1"/>
</dbReference>
<dbReference type="FunFam" id="1.20.1270.10:FF:000001">
    <property type="entry name" value="Molecular chaperone DnaK"/>
    <property type="match status" value="1"/>
</dbReference>
<dbReference type="FunFam" id="3.30.420.40:FF:000004">
    <property type="entry name" value="Molecular chaperone DnaK"/>
    <property type="match status" value="1"/>
</dbReference>
<dbReference type="FunFam" id="3.90.640.10:FF:000003">
    <property type="entry name" value="Molecular chaperone DnaK"/>
    <property type="match status" value="1"/>
</dbReference>
<dbReference type="Gene3D" id="1.20.1270.10">
    <property type="match status" value="1"/>
</dbReference>
<dbReference type="Gene3D" id="3.30.420.40">
    <property type="match status" value="2"/>
</dbReference>
<dbReference type="Gene3D" id="3.90.640.10">
    <property type="entry name" value="Actin, Chain A, domain 4"/>
    <property type="match status" value="1"/>
</dbReference>
<dbReference type="Gene3D" id="2.60.34.10">
    <property type="entry name" value="Substrate Binding Domain Of DNAk, Chain A, domain 1"/>
    <property type="match status" value="1"/>
</dbReference>
<dbReference type="HAMAP" id="MF_00332">
    <property type="entry name" value="DnaK"/>
    <property type="match status" value="1"/>
</dbReference>
<dbReference type="InterPro" id="IPR043129">
    <property type="entry name" value="ATPase_NBD"/>
</dbReference>
<dbReference type="InterPro" id="IPR012725">
    <property type="entry name" value="Chaperone_DnaK"/>
</dbReference>
<dbReference type="InterPro" id="IPR018181">
    <property type="entry name" value="Heat_shock_70_CS"/>
</dbReference>
<dbReference type="InterPro" id="IPR029048">
    <property type="entry name" value="HSP70_C_sf"/>
</dbReference>
<dbReference type="InterPro" id="IPR029047">
    <property type="entry name" value="HSP70_peptide-bd_sf"/>
</dbReference>
<dbReference type="InterPro" id="IPR013126">
    <property type="entry name" value="Hsp_70_fam"/>
</dbReference>
<dbReference type="NCBIfam" id="NF001413">
    <property type="entry name" value="PRK00290.1"/>
    <property type="match status" value="1"/>
</dbReference>
<dbReference type="NCBIfam" id="NF003520">
    <property type="entry name" value="PRK05183.1"/>
    <property type="match status" value="1"/>
</dbReference>
<dbReference type="NCBIfam" id="TIGR02350">
    <property type="entry name" value="prok_dnaK"/>
    <property type="match status" value="1"/>
</dbReference>
<dbReference type="PANTHER" id="PTHR19375">
    <property type="entry name" value="HEAT SHOCK PROTEIN 70KDA"/>
    <property type="match status" value="1"/>
</dbReference>
<dbReference type="Pfam" id="PF00012">
    <property type="entry name" value="HSP70"/>
    <property type="match status" value="1"/>
</dbReference>
<dbReference type="PRINTS" id="PR00301">
    <property type="entry name" value="HEATSHOCK70"/>
</dbReference>
<dbReference type="SUPFAM" id="SSF53067">
    <property type="entry name" value="Actin-like ATPase domain"/>
    <property type="match status" value="2"/>
</dbReference>
<dbReference type="SUPFAM" id="SSF100934">
    <property type="entry name" value="Heat shock protein 70kD (HSP70), C-terminal subdomain"/>
    <property type="match status" value="1"/>
</dbReference>
<dbReference type="SUPFAM" id="SSF100920">
    <property type="entry name" value="Heat shock protein 70kD (HSP70), peptide-binding domain"/>
    <property type="match status" value="1"/>
</dbReference>
<dbReference type="PROSITE" id="PS00297">
    <property type="entry name" value="HSP70_1"/>
    <property type="match status" value="1"/>
</dbReference>
<dbReference type="PROSITE" id="PS00329">
    <property type="entry name" value="HSP70_2"/>
    <property type="match status" value="1"/>
</dbReference>
<dbReference type="PROSITE" id="PS01036">
    <property type="entry name" value="HSP70_3"/>
    <property type="match status" value="1"/>
</dbReference>
<name>DNAK_BORPA</name>
<feature type="chain" id="PRO_0000078426" description="Chaperone protein DnaK">
    <location>
        <begin position="1"/>
        <end position="641"/>
    </location>
</feature>
<feature type="region of interest" description="Disordered" evidence="2">
    <location>
        <begin position="606"/>
        <end position="641"/>
    </location>
</feature>
<feature type="compositionally biased region" description="Low complexity" evidence="2">
    <location>
        <begin position="608"/>
        <end position="619"/>
    </location>
</feature>
<feature type="compositionally biased region" description="Basic and acidic residues" evidence="2">
    <location>
        <begin position="632"/>
        <end position="641"/>
    </location>
</feature>
<feature type="modified residue" description="Phosphothreonine; by autocatalysis" evidence="1">
    <location>
        <position position="200"/>
    </location>
</feature>
<keyword id="KW-0067">ATP-binding</keyword>
<keyword id="KW-0143">Chaperone</keyword>
<keyword id="KW-0547">Nucleotide-binding</keyword>
<keyword id="KW-0597">Phosphoprotein</keyword>
<keyword id="KW-0346">Stress response</keyword>
<protein>
    <recommendedName>
        <fullName evidence="1">Chaperone protein DnaK</fullName>
    </recommendedName>
    <alternativeName>
        <fullName evidence="1">HSP70</fullName>
    </alternativeName>
    <alternativeName>
        <fullName evidence="1">Heat shock 70 kDa protein</fullName>
    </alternativeName>
    <alternativeName>
        <fullName evidence="1">Heat shock protein 70</fullName>
    </alternativeName>
</protein>